<comment type="function">
    <text evidence="1">NAD-binding protein involved in the addition of a carboxymethylaminomethyl (cmnm) group at the wobble position (U34) of certain tRNAs, forming tRNA-cmnm(5)s(2)U34.</text>
</comment>
<comment type="cofactor">
    <cofactor evidence="1">
        <name>FAD</name>
        <dbReference type="ChEBI" id="CHEBI:57692"/>
    </cofactor>
</comment>
<comment type="subunit">
    <text evidence="1">Homodimer. Heterotetramer of two MnmE and two MnmG subunits.</text>
</comment>
<comment type="subcellular location">
    <subcellularLocation>
        <location evidence="1">Cytoplasm</location>
    </subcellularLocation>
</comment>
<comment type="similarity">
    <text evidence="1">Belongs to the MnmG family.</text>
</comment>
<accession>C6DJG3</accession>
<gene>
    <name evidence="1" type="primary">mnmG</name>
    <name evidence="1" type="synonym">gidA</name>
    <name type="ordered locus">PC1_4248</name>
</gene>
<reference key="1">
    <citation type="submission" date="2009-07" db="EMBL/GenBank/DDBJ databases">
        <title>Complete sequence of Pectobacterium carotovorum subsp. carotovorum PC1.</title>
        <authorList>
            <consortium name="US DOE Joint Genome Institute"/>
            <person name="Lucas S."/>
            <person name="Copeland A."/>
            <person name="Lapidus A."/>
            <person name="Glavina del Rio T."/>
            <person name="Tice H."/>
            <person name="Bruce D."/>
            <person name="Goodwin L."/>
            <person name="Pitluck S."/>
            <person name="Munk A.C."/>
            <person name="Brettin T."/>
            <person name="Detter J.C."/>
            <person name="Han C."/>
            <person name="Tapia R."/>
            <person name="Larimer F."/>
            <person name="Land M."/>
            <person name="Hauser L."/>
            <person name="Kyrpides N."/>
            <person name="Mikhailova N."/>
            <person name="Balakrishnan V."/>
            <person name="Glasner J."/>
            <person name="Perna N.T."/>
        </authorList>
    </citation>
    <scope>NUCLEOTIDE SEQUENCE [LARGE SCALE GENOMIC DNA]</scope>
    <source>
        <strain>PC1</strain>
    </source>
</reference>
<proteinExistence type="inferred from homology"/>
<name>MNMG_PECCP</name>
<keyword id="KW-0963">Cytoplasm</keyword>
<keyword id="KW-0274">FAD</keyword>
<keyword id="KW-0285">Flavoprotein</keyword>
<keyword id="KW-0520">NAD</keyword>
<keyword id="KW-0819">tRNA processing</keyword>
<dbReference type="EMBL" id="CP001657">
    <property type="protein sequence ID" value="ACT15262.1"/>
    <property type="molecule type" value="Genomic_DNA"/>
</dbReference>
<dbReference type="RefSeq" id="WP_015842326.1">
    <property type="nucleotide sequence ID" value="NC_012917.1"/>
</dbReference>
<dbReference type="SMR" id="C6DJG3"/>
<dbReference type="STRING" id="561230.PC1_4248"/>
<dbReference type="GeneID" id="67796236"/>
<dbReference type="KEGG" id="pct:PC1_4248"/>
<dbReference type="eggNOG" id="COG0445">
    <property type="taxonomic scope" value="Bacteria"/>
</dbReference>
<dbReference type="HOGENOM" id="CLU_007831_2_2_6"/>
<dbReference type="OrthoDB" id="9815560at2"/>
<dbReference type="Proteomes" id="UP000002736">
    <property type="component" value="Chromosome"/>
</dbReference>
<dbReference type="GO" id="GO:0005829">
    <property type="term" value="C:cytosol"/>
    <property type="evidence" value="ECO:0007669"/>
    <property type="project" value="TreeGrafter"/>
</dbReference>
<dbReference type="GO" id="GO:0050660">
    <property type="term" value="F:flavin adenine dinucleotide binding"/>
    <property type="evidence" value="ECO:0007669"/>
    <property type="project" value="UniProtKB-UniRule"/>
</dbReference>
<dbReference type="GO" id="GO:0030488">
    <property type="term" value="P:tRNA methylation"/>
    <property type="evidence" value="ECO:0007669"/>
    <property type="project" value="TreeGrafter"/>
</dbReference>
<dbReference type="GO" id="GO:0002098">
    <property type="term" value="P:tRNA wobble uridine modification"/>
    <property type="evidence" value="ECO:0007669"/>
    <property type="project" value="InterPro"/>
</dbReference>
<dbReference type="FunFam" id="1.10.10.1800:FF:000001">
    <property type="entry name" value="tRNA uridine 5-carboxymethylaminomethyl modification enzyme MnmG"/>
    <property type="match status" value="1"/>
</dbReference>
<dbReference type="FunFam" id="1.10.150.570:FF:000001">
    <property type="entry name" value="tRNA uridine 5-carboxymethylaminomethyl modification enzyme MnmG"/>
    <property type="match status" value="1"/>
</dbReference>
<dbReference type="FunFam" id="3.50.50.60:FF:000002">
    <property type="entry name" value="tRNA uridine 5-carboxymethylaminomethyl modification enzyme MnmG"/>
    <property type="match status" value="1"/>
</dbReference>
<dbReference type="FunFam" id="3.50.50.60:FF:000010">
    <property type="entry name" value="tRNA uridine 5-carboxymethylaminomethyl modification enzyme MnmG"/>
    <property type="match status" value="1"/>
</dbReference>
<dbReference type="Gene3D" id="3.50.50.60">
    <property type="entry name" value="FAD/NAD(P)-binding domain"/>
    <property type="match status" value="2"/>
</dbReference>
<dbReference type="Gene3D" id="1.10.150.570">
    <property type="entry name" value="GidA associated domain, C-terminal subdomain"/>
    <property type="match status" value="1"/>
</dbReference>
<dbReference type="Gene3D" id="1.10.10.1800">
    <property type="entry name" value="tRNA uridine 5-carboxymethylaminomethyl modification enzyme MnmG/GidA"/>
    <property type="match status" value="1"/>
</dbReference>
<dbReference type="HAMAP" id="MF_00129">
    <property type="entry name" value="MnmG_GidA"/>
    <property type="match status" value="1"/>
</dbReference>
<dbReference type="InterPro" id="IPR036188">
    <property type="entry name" value="FAD/NAD-bd_sf"/>
</dbReference>
<dbReference type="InterPro" id="IPR049312">
    <property type="entry name" value="GIDA_C_N"/>
</dbReference>
<dbReference type="InterPro" id="IPR004416">
    <property type="entry name" value="MnmG"/>
</dbReference>
<dbReference type="InterPro" id="IPR002218">
    <property type="entry name" value="MnmG-rel"/>
</dbReference>
<dbReference type="InterPro" id="IPR020595">
    <property type="entry name" value="MnmG-rel_CS"/>
</dbReference>
<dbReference type="InterPro" id="IPR026904">
    <property type="entry name" value="MnmG_C"/>
</dbReference>
<dbReference type="InterPro" id="IPR047001">
    <property type="entry name" value="MnmG_C_subdom"/>
</dbReference>
<dbReference type="InterPro" id="IPR044920">
    <property type="entry name" value="MnmG_C_subdom_sf"/>
</dbReference>
<dbReference type="InterPro" id="IPR040131">
    <property type="entry name" value="MnmG_N"/>
</dbReference>
<dbReference type="NCBIfam" id="TIGR00136">
    <property type="entry name" value="mnmG_gidA"/>
    <property type="match status" value="1"/>
</dbReference>
<dbReference type="PANTHER" id="PTHR11806">
    <property type="entry name" value="GLUCOSE INHIBITED DIVISION PROTEIN A"/>
    <property type="match status" value="1"/>
</dbReference>
<dbReference type="PANTHER" id="PTHR11806:SF0">
    <property type="entry name" value="PROTEIN MTO1 HOMOLOG, MITOCHONDRIAL"/>
    <property type="match status" value="1"/>
</dbReference>
<dbReference type="Pfam" id="PF01134">
    <property type="entry name" value="GIDA"/>
    <property type="match status" value="1"/>
</dbReference>
<dbReference type="Pfam" id="PF21680">
    <property type="entry name" value="GIDA_C_1st"/>
    <property type="match status" value="1"/>
</dbReference>
<dbReference type="Pfam" id="PF13932">
    <property type="entry name" value="SAM_GIDA_C"/>
    <property type="match status" value="1"/>
</dbReference>
<dbReference type="SMART" id="SM01228">
    <property type="entry name" value="GIDA_assoc_3"/>
    <property type="match status" value="1"/>
</dbReference>
<dbReference type="SUPFAM" id="SSF51905">
    <property type="entry name" value="FAD/NAD(P)-binding domain"/>
    <property type="match status" value="1"/>
</dbReference>
<dbReference type="PROSITE" id="PS01280">
    <property type="entry name" value="GIDA_1"/>
    <property type="match status" value="1"/>
</dbReference>
<dbReference type="PROSITE" id="PS01281">
    <property type="entry name" value="GIDA_2"/>
    <property type="match status" value="1"/>
</dbReference>
<feature type="chain" id="PRO_1000203164" description="tRNA uridine 5-carboxymethylaminomethyl modification enzyme MnmG">
    <location>
        <begin position="1"/>
        <end position="629"/>
    </location>
</feature>
<feature type="binding site" evidence="1">
    <location>
        <begin position="13"/>
        <end position="18"/>
    </location>
    <ligand>
        <name>FAD</name>
        <dbReference type="ChEBI" id="CHEBI:57692"/>
    </ligand>
</feature>
<feature type="binding site" evidence="1">
    <location>
        <position position="125"/>
    </location>
    <ligand>
        <name>FAD</name>
        <dbReference type="ChEBI" id="CHEBI:57692"/>
    </ligand>
</feature>
<feature type="binding site" evidence="1">
    <location>
        <position position="180"/>
    </location>
    <ligand>
        <name>FAD</name>
        <dbReference type="ChEBI" id="CHEBI:57692"/>
    </ligand>
</feature>
<feature type="binding site" evidence="1">
    <location>
        <begin position="273"/>
        <end position="287"/>
    </location>
    <ligand>
        <name>NAD(+)</name>
        <dbReference type="ChEBI" id="CHEBI:57540"/>
    </ligand>
</feature>
<feature type="binding site" evidence="1">
    <location>
        <position position="370"/>
    </location>
    <ligand>
        <name>FAD</name>
        <dbReference type="ChEBI" id="CHEBI:57692"/>
    </ligand>
</feature>
<evidence type="ECO:0000255" key="1">
    <source>
        <dbReference type="HAMAP-Rule" id="MF_00129"/>
    </source>
</evidence>
<organism>
    <name type="scientific">Pectobacterium carotovorum subsp. carotovorum (strain PC1)</name>
    <dbReference type="NCBI Taxonomy" id="561230"/>
    <lineage>
        <taxon>Bacteria</taxon>
        <taxon>Pseudomonadati</taxon>
        <taxon>Pseudomonadota</taxon>
        <taxon>Gammaproteobacteria</taxon>
        <taxon>Enterobacterales</taxon>
        <taxon>Pectobacteriaceae</taxon>
        <taxon>Pectobacterium</taxon>
    </lineage>
</organism>
<sequence>MFYPDPFDVIVIGGGHAGTEAAMASARMGQQTLLLTHNIDTLGQMSCNPAIGGIGKGHLVKEIDAMGGLMARAVDQAGIQFRILNSSKGPAVRATRAQADRVLYRQAIRTALENQPNLTIFQQAVDDLIVENDRVVGAVTQMGLKFRAKAVVLTVGTFLDGKIHIGLDNYSGGRAGDPPSIPLARRLRELPLRVNRLKTGTPPRIDARTIDFSVLAQQHGDNPMPVFSFLGNASQHPAQMPCYITHTNEKTHDVIRNNLDRSPMYAGIIEGIGPRYCPSIEDKVMRFADRNTHQIFLEPEGLTSNEIYPNGISTSLPFDVQWQIVRSMTGMENARIVRPGYAIEYDFFDPRDLKPTLENKFVHGLFFAGQINGTTGYEEAAAQGMLAGLNAARLAADKEGWSPRRDQAYLGVLVDDLCTLGTKEPYRMFTSRAEYRLMLREDNADLRLTEIGRELGMVDDHRWARFNEKLESIEKERQRLRDIHIHPQSELLDQVNSLLKTPLSREANGEELLRRPEVDYVQLTALPLFAPGLTDEQAAEQVEIQVKYEGYIARQQDEIEKQLRNENTLLPADLDYKQVNGLSNEVIAKLNDHKPSSIGQASRISGITPAAISILLIWLKKQGLLRRSA</sequence>
<protein>
    <recommendedName>
        <fullName evidence="1">tRNA uridine 5-carboxymethylaminomethyl modification enzyme MnmG</fullName>
    </recommendedName>
    <alternativeName>
        <fullName evidence="1">Glucose-inhibited division protein A</fullName>
    </alternativeName>
</protein>